<accession>A5U315</accession>
<evidence type="ECO:0000255" key="1">
    <source>
        <dbReference type="HAMAP-Rule" id="MF_00005"/>
    </source>
</evidence>
<dbReference type="EC" id="6.3.4.5" evidence="1"/>
<dbReference type="EMBL" id="CP000611">
    <property type="protein sequence ID" value="ABQ73415.1"/>
    <property type="molecule type" value="Genomic_DNA"/>
</dbReference>
<dbReference type="RefSeq" id="WP_003408179.1">
    <property type="nucleotide sequence ID" value="NZ_CP016972.1"/>
</dbReference>
<dbReference type="SMR" id="A5U315"/>
<dbReference type="KEGG" id="mra:MRA_1669"/>
<dbReference type="eggNOG" id="COG0137">
    <property type="taxonomic scope" value="Bacteria"/>
</dbReference>
<dbReference type="HOGENOM" id="CLU_032784_4_2_11"/>
<dbReference type="UniPathway" id="UPA00068">
    <property type="reaction ID" value="UER00113"/>
</dbReference>
<dbReference type="Proteomes" id="UP000001988">
    <property type="component" value="Chromosome"/>
</dbReference>
<dbReference type="GO" id="GO:0005737">
    <property type="term" value="C:cytoplasm"/>
    <property type="evidence" value="ECO:0007669"/>
    <property type="project" value="UniProtKB-SubCell"/>
</dbReference>
<dbReference type="GO" id="GO:0004055">
    <property type="term" value="F:argininosuccinate synthase activity"/>
    <property type="evidence" value="ECO:0007669"/>
    <property type="project" value="UniProtKB-UniRule"/>
</dbReference>
<dbReference type="GO" id="GO:0005524">
    <property type="term" value="F:ATP binding"/>
    <property type="evidence" value="ECO:0007669"/>
    <property type="project" value="UniProtKB-UniRule"/>
</dbReference>
<dbReference type="GO" id="GO:0000053">
    <property type="term" value="P:argininosuccinate metabolic process"/>
    <property type="evidence" value="ECO:0007669"/>
    <property type="project" value="TreeGrafter"/>
</dbReference>
<dbReference type="GO" id="GO:0006526">
    <property type="term" value="P:L-arginine biosynthetic process"/>
    <property type="evidence" value="ECO:0007669"/>
    <property type="project" value="UniProtKB-UniRule"/>
</dbReference>
<dbReference type="GO" id="GO:0000050">
    <property type="term" value="P:urea cycle"/>
    <property type="evidence" value="ECO:0007669"/>
    <property type="project" value="TreeGrafter"/>
</dbReference>
<dbReference type="CDD" id="cd01999">
    <property type="entry name" value="ASS"/>
    <property type="match status" value="1"/>
</dbReference>
<dbReference type="FunFam" id="3.40.50.620:FF:000038">
    <property type="entry name" value="Argininosuccinate synthase"/>
    <property type="match status" value="1"/>
</dbReference>
<dbReference type="FunFam" id="3.90.1260.10:FF:000006">
    <property type="entry name" value="Argininosuccinate synthase"/>
    <property type="match status" value="1"/>
</dbReference>
<dbReference type="Gene3D" id="3.90.1260.10">
    <property type="entry name" value="Argininosuccinate synthetase, chain A, domain 2"/>
    <property type="match status" value="1"/>
</dbReference>
<dbReference type="Gene3D" id="3.40.50.620">
    <property type="entry name" value="HUPs"/>
    <property type="match status" value="1"/>
</dbReference>
<dbReference type="Gene3D" id="1.20.5.470">
    <property type="entry name" value="Single helix bin"/>
    <property type="match status" value="1"/>
</dbReference>
<dbReference type="HAMAP" id="MF_00005">
    <property type="entry name" value="Arg_succ_synth_type1"/>
    <property type="match status" value="1"/>
</dbReference>
<dbReference type="InterPro" id="IPR048268">
    <property type="entry name" value="Arginosuc_syn_C"/>
</dbReference>
<dbReference type="InterPro" id="IPR048267">
    <property type="entry name" value="Arginosuc_syn_N"/>
</dbReference>
<dbReference type="InterPro" id="IPR001518">
    <property type="entry name" value="Arginosuc_synth"/>
</dbReference>
<dbReference type="InterPro" id="IPR018223">
    <property type="entry name" value="Arginosuc_synth_CS"/>
</dbReference>
<dbReference type="InterPro" id="IPR023434">
    <property type="entry name" value="Arginosuc_synth_type_1_subfam"/>
</dbReference>
<dbReference type="InterPro" id="IPR024074">
    <property type="entry name" value="AS_cat/multimer_dom_body"/>
</dbReference>
<dbReference type="InterPro" id="IPR014729">
    <property type="entry name" value="Rossmann-like_a/b/a_fold"/>
</dbReference>
<dbReference type="NCBIfam" id="TIGR00032">
    <property type="entry name" value="argG"/>
    <property type="match status" value="1"/>
</dbReference>
<dbReference type="NCBIfam" id="NF001770">
    <property type="entry name" value="PRK00509.1"/>
    <property type="match status" value="1"/>
</dbReference>
<dbReference type="PANTHER" id="PTHR11587">
    <property type="entry name" value="ARGININOSUCCINATE SYNTHASE"/>
    <property type="match status" value="1"/>
</dbReference>
<dbReference type="PANTHER" id="PTHR11587:SF2">
    <property type="entry name" value="ARGININOSUCCINATE SYNTHASE"/>
    <property type="match status" value="1"/>
</dbReference>
<dbReference type="Pfam" id="PF20979">
    <property type="entry name" value="Arginosuc_syn_C"/>
    <property type="match status" value="1"/>
</dbReference>
<dbReference type="Pfam" id="PF00764">
    <property type="entry name" value="Arginosuc_synth"/>
    <property type="match status" value="1"/>
</dbReference>
<dbReference type="SUPFAM" id="SSF52402">
    <property type="entry name" value="Adenine nucleotide alpha hydrolases-like"/>
    <property type="match status" value="1"/>
</dbReference>
<dbReference type="SUPFAM" id="SSF69864">
    <property type="entry name" value="Argininosuccinate synthetase, C-terminal domain"/>
    <property type="match status" value="1"/>
</dbReference>
<dbReference type="PROSITE" id="PS00564">
    <property type="entry name" value="ARGININOSUCCIN_SYN_1"/>
    <property type="match status" value="1"/>
</dbReference>
<dbReference type="PROSITE" id="PS00565">
    <property type="entry name" value="ARGININOSUCCIN_SYN_2"/>
    <property type="match status" value="1"/>
</dbReference>
<gene>
    <name evidence="1" type="primary">argG</name>
    <name type="ordered locus">MRA_1669</name>
</gene>
<keyword id="KW-0028">Amino-acid biosynthesis</keyword>
<keyword id="KW-0055">Arginine biosynthesis</keyword>
<keyword id="KW-0067">ATP-binding</keyword>
<keyword id="KW-0963">Cytoplasm</keyword>
<keyword id="KW-0436">Ligase</keyword>
<keyword id="KW-0547">Nucleotide-binding</keyword>
<keyword id="KW-1185">Reference proteome</keyword>
<comment type="catalytic activity">
    <reaction evidence="1">
        <text>L-citrulline + L-aspartate + ATP = 2-(N(omega)-L-arginino)succinate + AMP + diphosphate + H(+)</text>
        <dbReference type="Rhea" id="RHEA:10932"/>
        <dbReference type="ChEBI" id="CHEBI:15378"/>
        <dbReference type="ChEBI" id="CHEBI:29991"/>
        <dbReference type="ChEBI" id="CHEBI:30616"/>
        <dbReference type="ChEBI" id="CHEBI:33019"/>
        <dbReference type="ChEBI" id="CHEBI:57472"/>
        <dbReference type="ChEBI" id="CHEBI:57743"/>
        <dbReference type="ChEBI" id="CHEBI:456215"/>
        <dbReference type="EC" id="6.3.4.5"/>
    </reaction>
</comment>
<comment type="pathway">
    <text evidence="1">Amino-acid biosynthesis; L-arginine biosynthesis; L-arginine from L-ornithine and carbamoyl phosphate: step 2/3.</text>
</comment>
<comment type="subunit">
    <text evidence="1">Homotetramer.</text>
</comment>
<comment type="subcellular location">
    <subcellularLocation>
        <location evidence="1">Cytoplasm</location>
    </subcellularLocation>
</comment>
<comment type="similarity">
    <text evidence="1">Belongs to the argininosuccinate synthase family. Type 1 subfamily.</text>
</comment>
<sequence>MSERVILAYSGGLDTSVAISWIGKETGREVVAVAIDLGQGGEHMDVIRQRALDCGAVEAVVVDARDEFAEGYCLPTVLNNALYMDRYPLVSAISRPLIVKHLVAAAREHGGGIVAHGCTGKGNDQVRFEVGFASLAPDLEVLAPVRDYAWTREKAIAFAEENAIPINVTKRSPFSIDQNVWGRAVETGFLEHLWNAPTKDIYAYTEDPTINWGVPDEVIVGFERGVPVSVDGKPVSMLAAIEELNRRAGAQGVGRLDVVEDRLVGIKSREIYEAPGAMVLITAHTELEHVTLERELGRFKRQTDQRWAELVYDGLWYSPLKAALEAFVAKTQEHVSGEVRLVLHGGHIAVNGRRSAESLYDFNLATYDEGDSFDQSAARGFVYVHGLSSKLAARRDLR</sequence>
<proteinExistence type="inferred from homology"/>
<protein>
    <recommendedName>
        <fullName evidence="1">Argininosuccinate synthase</fullName>
        <ecNumber evidence="1">6.3.4.5</ecNumber>
    </recommendedName>
    <alternativeName>
        <fullName evidence="1">Citrulline--aspartate ligase</fullName>
    </alternativeName>
</protein>
<feature type="chain" id="PRO_1000000411" description="Argininosuccinate synthase">
    <location>
        <begin position="1"/>
        <end position="398"/>
    </location>
</feature>
<feature type="binding site" evidence="1">
    <location>
        <begin position="8"/>
        <end position="16"/>
    </location>
    <ligand>
        <name>ATP</name>
        <dbReference type="ChEBI" id="CHEBI:30616"/>
    </ligand>
</feature>
<feature type="binding site" evidence="1">
    <location>
        <position position="87"/>
    </location>
    <ligand>
        <name>L-citrulline</name>
        <dbReference type="ChEBI" id="CHEBI:57743"/>
    </ligand>
</feature>
<feature type="binding site" evidence="1">
    <location>
        <position position="117"/>
    </location>
    <ligand>
        <name>ATP</name>
        <dbReference type="ChEBI" id="CHEBI:30616"/>
    </ligand>
</feature>
<feature type="binding site" evidence="1">
    <location>
        <position position="119"/>
    </location>
    <ligand>
        <name>L-aspartate</name>
        <dbReference type="ChEBI" id="CHEBI:29991"/>
    </ligand>
</feature>
<feature type="binding site" evidence="1">
    <location>
        <position position="123"/>
    </location>
    <ligand>
        <name>L-aspartate</name>
        <dbReference type="ChEBI" id="CHEBI:29991"/>
    </ligand>
</feature>
<feature type="binding site" evidence="1">
    <location>
        <position position="123"/>
    </location>
    <ligand>
        <name>L-citrulline</name>
        <dbReference type="ChEBI" id="CHEBI:57743"/>
    </ligand>
</feature>
<feature type="binding site" evidence="1">
    <location>
        <position position="124"/>
    </location>
    <ligand>
        <name>L-aspartate</name>
        <dbReference type="ChEBI" id="CHEBI:29991"/>
    </ligand>
</feature>
<feature type="binding site" evidence="1">
    <location>
        <position position="127"/>
    </location>
    <ligand>
        <name>L-citrulline</name>
        <dbReference type="ChEBI" id="CHEBI:57743"/>
    </ligand>
</feature>
<feature type="binding site" evidence="1">
    <location>
        <position position="175"/>
    </location>
    <ligand>
        <name>L-citrulline</name>
        <dbReference type="ChEBI" id="CHEBI:57743"/>
    </ligand>
</feature>
<feature type="binding site" evidence="1">
    <location>
        <position position="260"/>
    </location>
    <ligand>
        <name>L-citrulline</name>
        <dbReference type="ChEBI" id="CHEBI:57743"/>
    </ligand>
</feature>
<feature type="binding site" evidence="1">
    <location>
        <position position="272"/>
    </location>
    <ligand>
        <name>L-citrulline</name>
        <dbReference type="ChEBI" id="CHEBI:57743"/>
    </ligand>
</feature>
<name>ASSY_MYCTA</name>
<organism>
    <name type="scientific">Mycobacterium tuberculosis (strain ATCC 25177 / H37Ra)</name>
    <dbReference type="NCBI Taxonomy" id="419947"/>
    <lineage>
        <taxon>Bacteria</taxon>
        <taxon>Bacillati</taxon>
        <taxon>Actinomycetota</taxon>
        <taxon>Actinomycetes</taxon>
        <taxon>Mycobacteriales</taxon>
        <taxon>Mycobacteriaceae</taxon>
        <taxon>Mycobacterium</taxon>
        <taxon>Mycobacterium tuberculosis complex</taxon>
    </lineage>
</organism>
<reference key="1">
    <citation type="journal article" date="2008" name="PLoS ONE">
        <title>Genetic basis of virulence attenuation revealed by comparative genomic analysis of Mycobacterium tuberculosis strain H37Ra versus H37Rv.</title>
        <authorList>
            <person name="Zheng H."/>
            <person name="Lu L."/>
            <person name="Wang B."/>
            <person name="Pu S."/>
            <person name="Zhang X."/>
            <person name="Zhu G."/>
            <person name="Shi W."/>
            <person name="Zhang L."/>
            <person name="Wang H."/>
            <person name="Wang S."/>
            <person name="Zhao G."/>
            <person name="Zhang Y."/>
        </authorList>
    </citation>
    <scope>NUCLEOTIDE SEQUENCE [LARGE SCALE GENOMIC DNA]</scope>
    <source>
        <strain>ATCC 25177 / H37Ra</strain>
    </source>
</reference>